<feature type="chain" id="PRO_0000222457" description="Capsid protein VP2">
    <location>
        <begin position="1"/>
        <end position="584"/>
    </location>
</feature>
<feature type="region of interest" description="Disordered" evidence="2">
    <location>
        <begin position="1"/>
        <end position="41"/>
    </location>
</feature>
<feature type="compositionally biased region" description="Gly residues" evidence="2">
    <location>
        <begin position="23"/>
        <end position="40"/>
    </location>
</feature>
<feature type="binding site" evidence="1">
    <location>
        <position position="180"/>
    </location>
    <ligand>
        <name>Mg(2+)</name>
        <dbReference type="ChEBI" id="CHEBI:18420"/>
        <label>1</label>
    </ligand>
</feature>
<feature type="disulfide bond" evidence="1">
    <location>
        <begin position="490"/>
        <end position="494"/>
    </location>
</feature>
<accession>P61826</accession>
<organismHost>
    <name type="scientific">Canis lupus familiaris</name>
    <name type="common">Dog</name>
    <name type="synonym">Canis familiaris</name>
    <dbReference type="NCBI Taxonomy" id="9615"/>
</organismHost>
<organismHost>
    <name type="scientific">Felis catus</name>
    <name type="common">Cat</name>
    <name type="synonym">Felis silvestris catus</name>
    <dbReference type="NCBI Taxonomy" id="9685"/>
</organismHost>
<sequence length="584" mass="64705">MSDGAVQPDGGQPAVRNERATGSGNGSGGGGGGGSGGVGISTGTFNNQTEFKFLENGWVEITANSSRLVHLNMPESENYRRVVVNNMDKTAVNGNMALDDIHVQIVTPWSLVDANAWGVWFNPGDWQLIVNTMSELHLVSFEQEIFNVVLKTVSESATQPPTKVYNNDLTASLMVALDSNNTMPFTPAAMRSETLGFYPWKPTIPTPWRYYFQWDRTLVPSHTGTSGTPTNIYHGTDPDDVQFYTIENSVPVHLLRTGDEFATGTFFFDCKPCRLTHTWQTNRALGLPPFLNSLPQSEGATNFGDIGVQQDKRRGVTQMGNTNYITEATIMRPAEVGYSAPYYSFEASTQGPFKTPIAAGRGGAQTYENQAADGDPRYAFGRQHGQKTTTTGETPDRITYIAHHDTGRYPEGDWIQNINFNLPVTNDNVLLPTDPIGGKTGINYTNIFNTYGPLTALNNVPPVYPNGQIWDKEFDTDLKPRPHVNAPFVCQHNCPGQLFVKVAPNLTNEYDPDASANMSRIVTYSHFWWKGKLVFKAKLRASHTWNPIQQMSINVDNQFNYVPSNIGGMKIVYEKSQLAPRKLY</sequence>
<name>CAPSD_PAVC</name>
<keyword id="KW-0025">Alternative splicing</keyword>
<keyword id="KW-0167">Capsid protein</keyword>
<keyword id="KW-1165">Clathrin-mediated endocytosis of virus by host</keyword>
<keyword id="KW-1176">Cytoplasmic inwards viral transport</keyword>
<keyword id="KW-1015">Disulfide bond</keyword>
<keyword id="KW-1048">Host nucleus</keyword>
<keyword id="KW-0945">Host-virus interaction</keyword>
<keyword id="KW-0460">Magnesium</keyword>
<keyword id="KW-0479">Metal-binding</keyword>
<keyword id="KW-1177">Microtubular inwards viral transport</keyword>
<keyword id="KW-1140">T=1 icosahedral capsid protein</keyword>
<keyword id="KW-1233">Viral attachment to host adhesion receptor</keyword>
<keyword id="KW-1161">Viral attachment to host cell</keyword>
<keyword id="KW-1234">Viral attachment to host entry receptor</keyword>
<keyword id="KW-1162">Viral penetration into host cytoplasm</keyword>
<keyword id="KW-1163">Viral penetration into host nucleus</keyword>
<keyword id="KW-1173">Viral penetration via permeabilization of host membrane</keyword>
<keyword id="KW-0946">Virion</keyword>
<keyword id="KW-1164">Virus endocytosis by host</keyword>
<keyword id="KW-1160">Virus entry into host cell</keyword>
<reference key="1">
    <citation type="submission" date="2004-04" db="EMBL/GenBank/DDBJ databases">
        <title>Cloning of VP2 gene of canine parvovirus in a mammalian expression vector for use as DNA vaccine.</title>
        <authorList>
            <person name="Gupta P.K."/>
            <person name="Rai A."/>
            <person name="Rai N."/>
            <person name="Raut A.A."/>
            <person name="Chauhan S."/>
        </authorList>
    </citation>
    <scope>NUCLEOTIDE SEQUENCE [GENOMIC DNA]</scope>
    <source>
        <strain>Isolate CPV2b-India</strain>
    </source>
</reference>
<proteinExistence type="inferred from homology"/>
<evidence type="ECO:0000250" key="1"/>
<evidence type="ECO:0000256" key="2">
    <source>
        <dbReference type="SAM" id="MobiDB-lite"/>
    </source>
</evidence>
<evidence type="ECO:0000305" key="3"/>
<protein>
    <recommendedName>
        <fullName>Capsid protein VP2</fullName>
    </recommendedName>
    <alternativeName>
        <fullName>Coat protein VP2</fullName>
    </alternativeName>
</protein>
<comment type="function">
    <text evidence="1">Capsid protein self-assembles to form an icosahedral capsid with a T=1 symmetry, about 22 nm in diameter, and consisting of 60 copies of two size variants of the capsid proteins, VP1 and VP2, which differ by the presence of an N-terminal extension in the minor protein VP1. The capsid encapsulates the genomic ssDNA. Capsid proteins are responsible for the attachment to host cell receptor TFRC. This attachment induces virion internalization predominantly through clathrin-endocytosis. Binding to the host receptors also induces capsid rearrangements leading to surface exposure of VP1 N-terminus, specifically its phospholipase A2-like region and nuclear localization signal(s). VP1 N-terminus might serve as a lipolytic enzyme to breach the endosomal membrane during entry into host cell. Intracytoplasmic transport involves microtubules and interaction between capsid proteins and host dynein. Exposure of nuclear localization signal probably allows nuclear import of capsids (By similarity).</text>
</comment>
<comment type="subunit">
    <text evidence="1">Interacts with host TFRC.</text>
</comment>
<comment type="subcellular location">
    <subcellularLocation>
        <location evidence="1">Virion</location>
    </subcellularLocation>
    <subcellularLocation>
        <location evidence="3">Host nucleus</location>
    </subcellularLocation>
</comment>
<comment type="alternative products">
    <event type="alternative splicing"/>
    <isoform>
        <id>P61826-1</id>
        <name>VP2</name>
        <sequence type="displayed"/>
    </isoform>
    <isoform>
        <id>P61826-2</id>
        <name>VP1</name>
        <sequence type="not described"/>
    </isoform>
</comment>
<comment type="domain">
    <text evidence="1">The N-terminus of VP1 is sequestered within the mature capsid. It contains a phospholipase A2-like region and nuclear localization signals that might be exposed by capsid modifications during virus entry (By similarity).</text>
</comment>
<comment type="miscellaneous">
    <text evidence="1">The capsids of autonomous parvoviruses expose a proportion of VP2 N-terminus and part of that sequence can be cleaved of to form VP3.</text>
</comment>
<comment type="miscellaneous">
    <molecule>Isoform VP2</molecule>
    <text>Major splicing isoform produced by deletion of the initiating AUG for VP1 and downstream translation of VP2.</text>
</comment>
<comment type="miscellaneous">
    <molecule>Isoform VP1</molecule>
    <text evidence="3">Minor splicing isoform.</text>
</comment>
<comment type="similarity">
    <text evidence="3">Belongs to the parvoviridae capsid protein family.</text>
</comment>
<dbReference type="EMBL" id="AJ698134">
    <property type="protein sequence ID" value="CAG27358.1"/>
    <property type="molecule type" value="Genomic_DNA"/>
</dbReference>
<dbReference type="SMR" id="P61826"/>
<dbReference type="ABCD" id="P61826">
    <property type="antibodies" value="1 sequenced antibody"/>
</dbReference>
<dbReference type="GO" id="GO:0043657">
    <property type="term" value="C:host cell"/>
    <property type="evidence" value="ECO:0007669"/>
    <property type="project" value="GOC"/>
</dbReference>
<dbReference type="GO" id="GO:0042025">
    <property type="term" value="C:host cell nucleus"/>
    <property type="evidence" value="ECO:0007669"/>
    <property type="project" value="UniProtKB-SubCell"/>
</dbReference>
<dbReference type="GO" id="GO:0039615">
    <property type="term" value="C:T=1 icosahedral viral capsid"/>
    <property type="evidence" value="ECO:0007669"/>
    <property type="project" value="UniProtKB-KW"/>
</dbReference>
<dbReference type="GO" id="GO:0046872">
    <property type="term" value="F:metal ion binding"/>
    <property type="evidence" value="ECO:0007669"/>
    <property type="project" value="UniProtKB-KW"/>
</dbReference>
<dbReference type="GO" id="GO:0005198">
    <property type="term" value="F:structural molecule activity"/>
    <property type="evidence" value="ECO:0007669"/>
    <property type="project" value="InterPro"/>
</dbReference>
<dbReference type="GO" id="GO:0098671">
    <property type="term" value="P:adhesion receptor-mediated virion attachment to host cell"/>
    <property type="evidence" value="ECO:0007669"/>
    <property type="project" value="UniProtKB-KW"/>
</dbReference>
<dbReference type="GO" id="GO:0075512">
    <property type="term" value="P:clathrin-dependent endocytosis of virus by host cell"/>
    <property type="evidence" value="ECO:0007669"/>
    <property type="project" value="UniProtKB-KW"/>
</dbReference>
<dbReference type="GO" id="GO:0098670">
    <property type="term" value="P:entry receptor-mediated virion attachment to host cell"/>
    <property type="evidence" value="ECO:0007669"/>
    <property type="project" value="UniProtKB-KW"/>
</dbReference>
<dbReference type="GO" id="GO:0075521">
    <property type="term" value="P:microtubule-dependent intracellular transport of viral material towards nucleus"/>
    <property type="evidence" value="ECO:0007669"/>
    <property type="project" value="UniProtKB-KW"/>
</dbReference>
<dbReference type="GO" id="GO:0140267">
    <property type="term" value="P:symbiont entry into host cell via permeabilization of host membrane"/>
    <property type="evidence" value="ECO:0007669"/>
    <property type="project" value="UniProtKB-KW"/>
</dbReference>
<dbReference type="GO" id="GO:0075732">
    <property type="term" value="P:viral penetration into host nucleus"/>
    <property type="evidence" value="ECO:0007669"/>
    <property type="project" value="UniProtKB-KW"/>
</dbReference>
<dbReference type="Gene3D" id="2.170.30.10">
    <property type="entry name" value="Parvovirus coat protein VP1/VP2"/>
    <property type="match status" value="1"/>
</dbReference>
<dbReference type="InterPro" id="IPR016184">
    <property type="entry name" value="Capsid/spike_ssDNA_virus"/>
</dbReference>
<dbReference type="InterPro" id="IPR001403">
    <property type="entry name" value="Parvovirus_coat"/>
</dbReference>
<dbReference type="InterPro" id="IPR036952">
    <property type="entry name" value="VP1/VP2"/>
</dbReference>
<dbReference type="Pfam" id="PF00740">
    <property type="entry name" value="Parvo_coat"/>
    <property type="match status" value="1"/>
</dbReference>
<dbReference type="SUPFAM" id="SSF88645">
    <property type="entry name" value="ssDNA viruses"/>
    <property type="match status" value="1"/>
</dbReference>
<organism>
    <name type="scientific">Canine parvovirus type 2</name>
    <name type="common">CPV-2</name>
    <dbReference type="NCBI Taxonomy" id="10788"/>
    <lineage>
        <taxon>Viruses</taxon>
        <taxon>Monodnaviria</taxon>
        <taxon>Shotokuvirae</taxon>
        <taxon>Cossaviricota</taxon>
        <taxon>Quintoviricetes</taxon>
        <taxon>Piccovirales</taxon>
        <taxon>Parvoviridae</taxon>
        <taxon>Parvovirinae</taxon>
        <taxon>Protoparvovirus</taxon>
        <taxon>Protoparvovirus carnivoran1</taxon>
    </lineage>
</organism>